<accession>A0Q735</accession>
<evidence type="ECO:0000255" key="1">
    <source>
        <dbReference type="HAMAP-Rule" id="MF_00023"/>
    </source>
</evidence>
<evidence type="ECO:0000256" key="2">
    <source>
        <dbReference type="SAM" id="MobiDB-lite"/>
    </source>
</evidence>
<proteinExistence type="inferred from homology"/>
<keyword id="KW-0963">Cytoplasm</keyword>
<keyword id="KW-0694">RNA-binding</keyword>
<feature type="chain" id="PRO_1000002060" description="SsrA-binding protein">
    <location>
        <begin position="1"/>
        <end position="157"/>
    </location>
</feature>
<feature type="region of interest" description="Disordered" evidence="2">
    <location>
        <begin position="132"/>
        <end position="157"/>
    </location>
</feature>
<feature type="compositionally biased region" description="Basic and acidic residues" evidence="2">
    <location>
        <begin position="135"/>
        <end position="157"/>
    </location>
</feature>
<protein>
    <recommendedName>
        <fullName evidence="1">SsrA-binding protein</fullName>
    </recommendedName>
    <alternativeName>
        <fullName evidence="1">Small protein B</fullName>
    </alternativeName>
</protein>
<sequence length="157" mass="17924">MSKHKVSPATIAKNKKALHDYTILEKFEAGIVLQGWEVKSIRAGKVQMVDSHVHIKHGEAWLFNCLITPLLSASTHVVADAAATRKLLLNRREINKIMGRIEQKGFTCVPLAMYWKGPRVKVEIALAQGKKVHDKRQAQKDKDWAREKDRLFKKAYK</sequence>
<reference key="1">
    <citation type="journal article" date="2007" name="Genome Biol.">
        <title>Comparison of Francisella tularensis genomes reveals evolutionary events associated with the emergence of human pathogenic strains.</title>
        <authorList>
            <person name="Rohmer L."/>
            <person name="Fong C."/>
            <person name="Abmayr S."/>
            <person name="Wasnick M."/>
            <person name="Larson Freeman T.J."/>
            <person name="Radey M."/>
            <person name="Guina T."/>
            <person name="Svensson K."/>
            <person name="Hayden H.S."/>
            <person name="Jacobs M."/>
            <person name="Gallagher L.A."/>
            <person name="Manoil C."/>
            <person name="Ernst R.K."/>
            <person name="Drees B."/>
            <person name="Buckley D."/>
            <person name="Haugen E."/>
            <person name="Bovee D."/>
            <person name="Zhou Y."/>
            <person name="Chang J."/>
            <person name="Levy R."/>
            <person name="Lim R."/>
            <person name="Gillett W."/>
            <person name="Guenthener D."/>
            <person name="Kang A."/>
            <person name="Shaffer S.A."/>
            <person name="Taylor G."/>
            <person name="Chen J."/>
            <person name="Gallis B."/>
            <person name="D'Argenio D.A."/>
            <person name="Forsman M."/>
            <person name="Olson M.V."/>
            <person name="Goodlett D.R."/>
            <person name="Kaul R."/>
            <person name="Miller S.I."/>
            <person name="Brittnacher M.J."/>
        </authorList>
    </citation>
    <scope>NUCLEOTIDE SEQUENCE [LARGE SCALE GENOMIC DNA]</scope>
    <source>
        <strain>U112</strain>
    </source>
</reference>
<gene>
    <name evidence="1" type="primary">smpB</name>
    <name type="ordered locus">FTN_1164</name>
</gene>
<comment type="function">
    <text evidence="1">Required for rescue of stalled ribosomes mediated by trans-translation. Binds to transfer-messenger RNA (tmRNA), required for stable association of tmRNA with ribosomes. tmRNA and SmpB together mimic tRNA shape, replacing the anticodon stem-loop with SmpB. tmRNA is encoded by the ssrA gene; the 2 termini fold to resemble tRNA(Ala) and it encodes a 'tag peptide', a short internal open reading frame. During trans-translation Ala-aminoacylated tmRNA acts like a tRNA, entering the A-site of stalled ribosomes, displacing the stalled mRNA. The ribosome then switches to translate the ORF on the tmRNA; the nascent peptide is terminated with the 'tag peptide' encoded by the tmRNA and targeted for degradation. The ribosome is freed to recommence translation, which seems to be the essential function of trans-translation.</text>
</comment>
<comment type="subcellular location">
    <subcellularLocation>
        <location evidence="1">Cytoplasm</location>
    </subcellularLocation>
    <text evidence="1">The tmRNA-SmpB complex associates with stalled 70S ribosomes.</text>
</comment>
<comment type="similarity">
    <text evidence="1">Belongs to the SmpB family.</text>
</comment>
<name>SSRP_FRATN</name>
<dbReference type="EMBL" id="CP000439">
    <property type="protein sequence ID" value="ABK90050.1"/>
    <property type="molecule type" value="Genomic_DNA"/>
</dbReference>
<dbReference type="RefSeq" id="WP_003034286.1">
    <property type="nucleotide sequence ID" value="NZ_CP009633.1"/>
</dbReference>
<dbReference type="SMR" id="A0Q735"/>
<dbReference type="GeneID" id="75265106"/>
<dbReference type="KEGG" id="ftn:FTN_1164"/>
<dbReference type="KEGG" id="ftx:AW25_843"/>
<dbReference type="BioCyc" id="FTUL401614:G1G75-1207-MONOMER"/>
<dbReference type="Proteomes" id="UP000000762">
    <property type="component" value="Chromosome"/>
</dbReference>
<dbReference type="GO" id="GO:0005829">
    <property type="term" value="C:cytosol"/>
    <property type="evidence" value="ECO:0007669"/>
    <property type="project" value="TreeGrafter"/>
</dbReference>
<dbReference type="GO" id="GO:0003723">
    <property type="term" value="F:RNA binding"/>
    <property type="evidence" value="ECO:0007669"/>
    <property type="project" value="UniProtKB-UniRule"/>
</dbReference>
<dbReference type="GO" id="GO:0070929">
    <property type="term" value="P:trans-translation"/>
    <property type="evidence" value="ECO:0007669"/>
    <property type="project" value="UniProtKB-UniRule"/>
</dbReference>
<dbReference type="CDD" id="cd09294">
    <property type="entry name" value="SmpB"/>
    <property type="match status" value="1"/>
</dbReference>
<dbReference type="Gene3D" id="2.40.280.10">
    <property type="match status" value="1"/>
</dbReference>
<dbReference type="HAMAP" id="MF_00023">
    <property type="entry name" value="SmpB"/>
    <property type="match status" value="1"/>
</dbReference>
<dbReference type="InterPro" id="IPR023620">
    <property type="entry name" value="SmpB"/>
</dbReference>
<dbReference type="InterPro" id="IPR000037">
    <property type="entry name" value="SsrA-bd_prot"/>
</dbReference>
<dbReference type="InterPro" id="IPR020081">
    <property type="entry name" value="SsrA-bd_prot_CS"/>
</dbReference>
<dbReference type="NCBIfam" id="NF003843">
    <property type="entry name" value="PRK05422.1"/>
    <property type="match status" value="1"/>
</dbReference>
<dbReference type="NCBIfam" id="TIGR00086">
    <property type="entry name" value="smpB"/>
    <property type="match status" value="1"/>
</dbReference>
<dbReference type="PANTHER" id="PTHR30308:SF2">
    <property type="entry name" value="SSRA-BINDING PROTEIN"/>
    <property type="match status" value="1"/>
</dbReference>
<dbReference type="PANTHER" id="PTHR30308">
    <property type="entry name" value="TMRNA-BINDING COMPONENT OF TRANS-TRANSLATION TAGGING COMPLEX"/>
    <property type="match status" value="1"/>
</dbReference>
<dbReference type="Pfam" id="PF01668">
    <property type="entry name" value="SmpB"/>
    <property type="match status" value="1"/>
</dbReference>
<dbReference type="SUPFAM" id="SSF74982">
    <property type="entry name" value="Small protein B (SmpB)"/>
    <property type="match status" value="1"/>
</dbReference>
<dbReference type="PROSITE" id="PS01317">
    <property type="entry name" value="SSRP"/>
    <property type="match status" value="1"/>
</dbReference>
<organism>
    <name type="scientific">Francisella tularensis subsp. novicida (strain U112)</name>
    <dbReference type="NCBI Taxonomy" id="401614"/>
    <lineage>
        <taxon>Bacteria</taxon>
        <taxon>Pseudomonadati</taxon>
        <taxon>Pseudomonadota</taxon>
        <taxon>Gammaproteobacteria</taxon>
        <taxon>Thiotrichales</taxon>
        <taxon>Francisellaceae</taxon>
        <taxon>Francisella</taxon>
    </lineage>
</organism>